<feature type="chain" id="PRO_0000153198" description="Glutamine synthetase nodule isozyme">
    <location>
        <begin position="1"/>
        <end position="356"/>
    </location>
</feature>
<feature type="domain" description="GS beta-grasp" evidence="2">
    <location>
        <begin position="19"/>
        <end position="99"/>
    </location>
</feature>
<feature type="domain" description="GS catalytic" evidence="3">
    <location>
        <begin position="106"/>
        <end position="356"/>
    </location>
</feature>
<feature type="region of interest" description="Disordered" evidence="4">
    <location>
        <begin position="41"/>
        <end position="66"/>
    </location>
</feature>
<keyword id="KW-0067">ATP-binding</keyword>
<keyword id="KW-0963">Cytoplasm</keyword>
<keyword id="KW-0436">Ligase</keyword>
<keyword id="KW-0535">Nitrogen fixation</keyword>
<keyword id="KW-0547">Nucleotide-binding</keyword>
<reference key="1">
    <citation type="submission" date="1993-02" db="EMBL/GenBank/DDBJ databases">
        <title>A nodulin-specific glutamine synthetase from Vigna aconitifolia.</title>
        <authorList>
            <person name="Lin Z."/>
            <person name="Miao G.H."/>
            <person name="Verma D.P.S."/>
        </authorList>
    </citation>
    <scope>NUCLEOTIDE SEQUENCE [MRNA]</scope>
</reference>
<protein>
    <recommendedName>
        <fullName>Glutamine synthetase nodule isozyme</fullName>
        <shortName>GS</shortName>
        <ecNumber>6.3.1.2</ecNumber>
    </recommendedName>
    <alternativeName>
        <fullName>Glutamate--ammonia ligase</fullName>
    </alternativeName>
</protein>
<comment type="catalytic activity">
    <reaction>
        <text>L-glutamate + NH4(+) + ATP = L-glutamine + ADP + phosphate + H(+)</text>
        <dbReference type="Rhea" id="RHEA:16169"/>
        <dbReference type="ChEBI" id="CHEBI:15378"/>
        <dbReference type="ChEBI" id="CHEBI:28938"/>
        <dbReference type="ChEBI" id="CHEBI:29985"/>
        <dbReference type="ChEBI" id="CHEBI:30616"/>
        <dbReference type="ChEBI" id="CHEBI:43474"/>
        <dbReference type="ChEBI" id="CHEBI:58359"/>
        <dbReference type="ChEBI" id="CHEBI:456216"/>
        <dbReference type="EC" id="6.3.1.2"/>
    </reaction>
</comment>
<comment type="subunit">
    <text evidence="1">Homooctamer.</text>
</comment>
<comment type="subcellular location">
    <subcellularLocation>
        <location>Cytoplasm</location>
    </subcellularLocation>
</comment>
<comment type="similarity">
    <text evidence="5">Belongs to the glutamine synthetase family.</text>
</comment>
<name>GLNA_VIGAC</name>
<accession>P32289</accession>
<dbReference type="EC" id="6.3.1.2"/>
<dbReference type="EMBL" id="M94765">
    <property type="protein sequence ID" value="AAA34239.1"/>
    <property type="molecule type" value="mRNA"/>
</dbReference>
<dbReference type="SMR" id="P32289"/>
<dbReference type="GO" id="GO:0005737">
    <property type="term" value="C:cytoplasm"/>
    <property type="evidence" value="ECO:0007669"/>
    <property type="project" value="UniProtKB-SubCell"/>
</dbReference>
<dbReference type="GO" id="GO:0005524">
    <property type="term" value="F:ATP binding"/>
    <property type="evidence" value="ECO:0007669"/>
    <property type="project" value="UniProtKB-KW"/>
</dbReference>
<dbReference type="GO" id="GO:0004356">
    <property type="term" value="F:glutamine synthetase activity"/>
    <property type="evidence" value="ECO:0007669"/>
    <property type="project" value="UniProtKB-EC"/>
</dbReference>
<dbReference type="GO" id="GO:0006542">
    <property type="term" value="P:glutamine biosynthetic process"/>
    <property type="evidence" value="ECO:0007669"/>
    <property type="project" value="InterPro"/>
</dbReference>
<dbReference type="FunFam" id="3.30.590.10:FF:000004">
    <property type="entry name" value="Glutamine synthetase"/>
    <property type="match status" value="1"/>
</dbReference>
<dbReference type="FunFam" id="3.10.20.70:FF:000003">
    <property type="entry name" value="Glutamine synthetase, chloroplastic"/>
    <property type="match status" value="1"/>
</dbReference>
<dbReference type="Gene3D" id="3.10.20.70">
    <property type="entry name" value="Glutamine synthetase, N-terminal domain"/>
    <property type="match status" value="1"/>
</dbReference>
<dbReference type="Gene3D" id="3.30.590.10">
    <property type="entry name" value="Glutamine synthetase/guanido kinase, catalytic domain"/>
    <property type="match status" value="1"/>
</dbReference>
<dbReference type="InterPro" id="IPR008147">
    <property type="entry name" value="Gln_synt_N"/>
</dbReference>
<dbReference type="InterPro" id="IPR036651">
    <property type="entry name" value="Gln_synt_N_sf"/>
</dbReference>
<dbReference type="InterPro" id="IPR014746">
    <property type="entry name" value="Gln_synth/guanido_kin_cat_dom"/>
</dbReference>
<dbReference type="InterPro" id="IPR008146">
    <property type="entry name" value="Gln_synth_cat_dom"/>
</dbReference>
<dbReference type="InterPro" id="IPR027303">
    <property type="entry name" value="Gln_synth_gly_rich_site"/>
</dbReference>
<dbReference type="InterPro" id="IPR027302">
    <property type="entry name" value="Gln_synth_N_conserv_site"/>
</dbReference>
<dbReference type="InterPro" id="IPR050292">
    <property type="entry name" value="Glutamine_Synthetase"/>
</dbReference>
<dbReference type="PANTHER" id="PTHR20852">
    <property type="entry name" value="GLUTAMINE SYNTHETASE"/>
    <property type="match status" value="1"/>
</dbReference>
<dbReference type="PANTHER" id="PTHR20852:SF93">
    <property type="entry name" value="GLUTAMINE SYNTHETASE CYTOSOLIC ISOZYME 1-1"/>
    <property type="match status" value="1"/>
</dbReference>
<dbReference type="Pfam" id="PF00120">
    <property type="entry name" value="Gln-synt_C"/>
    <property type="match status" value="1"/>
</dbReference>
<dbReference type="SMART" id="SM01230">
    <property type="entry name" value="Gln-synt_C"/>
    <property type="match status" value="1"/>
</dbReference>
<dbReference type="SUPFAM" id="SSF54368">
    <property type="entry name" value="Glutamine synthetase, N-terminal domain"/>
    <property type="match status" value="1"/>
</dbReference>
<dbReference type="SUPFAM" id="SSF55931">
    <property type="entry name" value="Glutamine synthetase/guanido kinase"/>
    <property type="match status" value="1"/>
</dbReference>
<dbReference type="PROSITE" id="PS00180">
    <property type="entry name" value="GLNA_1"/>
    <property type="match status" value="1"/>
</dbReference>
<dbReference type="PROSITE" id="PS00181">
    <property type="entry name" value="GLNA_ATP"/>
    <property type="match status" value="1"/>
</dbReference>
<dbReference type="PROSITE" id="PS51986">
    <property type="entry name" value="GS_BETA_GRASP"/>
    <property type="match status" value="1"/>
</dbReference>
<dbReference type="PROSITE" id="PS51987">
    <property type="entry name" value="GS_CATALYTIC"/>
    <property type="match status" value="1"/>
</dbReference>
<proteinExistence type="evidence at transcript level"/>
<sequence length="356" mass="39104">MSLLSDLINLNLSDTTEKIIAEYIWIGGSGLDLRSKARTLPGPVSDPSKLPKWNYDGSSTGQAPGEDSEVIIYPQAIFKDPFRRGNNILVMCDAYTPAGEPIPTNKRHNAAKIFSHPDVVAEEPWYGIEQEYTLLQKDVNWPLGWPVGGFPGPQGPYYCGAGADKAFGRDIVDAHYKACLYAGINISGINGEVMPGQWEFQVGPAVGISAGDELWVARYILERITEIAGVVLSFDPKPIKGDWNGAGAHTNYSTKTMRNDGGYEVIKSAIEKLGKRHKEHIAAYGEGNERRLTGRHETADINTFLWGVANRGASIRVGRDTEKAGKGYFEDRRPASNMDPYVVTSMIADTTILWKP</sequence>
<organism>
    <name type="scientific">Vigna aconitifolia</name>
    <name type="common">Moth bean</name>
    <name type="synonym">Phaseolus aconitifolius</name>
    <dbReference type="NCBI Taxonomy" id="3918"/>
    <lineage>
        <taxon>Eukaryota</taxon>
        <taxon>Viridiplantae</taxon>
        <taxon>Streptophyta</taxon>
        <taxon>Embryophyta</taxon>
        <taxon>Tracheophyta</taxon>
        <taxon>Spermatophyta</taxon>
        <taxon>Magnoliopsida</taxon>
        <taxon>eudicotyledons</taxon>
        <taxon>Gunneridae</taxon>
        <taxon>Pentapetalae</taxon>
        <taxon>rosids</taxon>
        <taxon>fabids</taxon>
        <taxon>Fabales</taxon>
        <taxon>Fabaceae</taxon>
        <taxon>Papilionoideae</taxon>
        <taxon>50 kb inversion clade</taxon>
        <taxon>NPAAA clade</taxon>
        <taxon>indigoferoid/millettioid clade</taxon>
        <taxon>Phaseoleae</taxon>
        <taxon>Vigna</taxon>
    </lineage>
</organism>
<evidence type="ECO:0000250" key="1"/>
<evidence type="ECO:0000255" key="2">
    <source>
        <dbReference type="PROSITE-ProRule" id="PRU01330"/>
    </source>
</evidence>
<evidence type="ECO:0000255" key="3">
    <source>
        <dbReference type="PROSITE-ProRule" id="PRU01331"/>
    </source>
</evidence>
<evidence type="ECO:0000256" key="4">
    <source>
        <dbReference type="SAM" id="MobiDB-lite"/>
    </source>
</evidence>
<evidence type="ECO:0000305" key="5"/>